<sequence>MTWLEIVVLALIQGLTEFLPISSSAHLILPSEVWGWQDQGLAFDVAVHVGTLLAVMVYFRADIFNLLNGWIKQITGGGASQESRLAWAVILGTIPACVAGLLLDSWIEENLRSALVIALTTIGFGVLLGMADRKEGTRDIDQFTLKDALIIGVSQALALIPGTSRSGITMTSALFLGLNRDTAARFSFLLSIPLIAAAGLFKGLELADTGTSSQWSEIAGATLISAVSAYACIHLFLKFLQKIGFMPFVIYRMLLGAGLLVWLYVA</sequence>
<accession>Q2SL19</accession>
<evidence type="ECO:0000255" key="1">
    <source>
        <dbReference type="HAMAP-Rule" id="MF_01006"/>
    </source>
</evidence>
<proteinExistence type="inferred from homology"/>
<name>UPPP_HAHCH</name>
<dbReference type="EC" id="3.6.1.27" evidence="1"/>
<dbReference type="EMBL" id="CP000155">
    <property type="protein sequence ID" value="ABC28655.1"/>
    <property type="molecule type" value="Genomic_DNA"/>
</dbReference>
<dbReference type="RefSeq" id="WP_011395727.1">
    <property type="nucleotide sequence ID" value="NC_007645.1"/>
</dbReference>
<dbReference type="SMR" id="Q2SL19"/>
<dbReference type="STRING" id="349521.HCH_01816"/>
<dbReference type="KEGG" id="hch:HCH_01816"/>
<dbReference type="eggNOG" id="COG1968">
    <property type="taxonomic scope" value="Bacteria"/>
</dbReference>
<dbReference type="HOGENOM" id="CLU_060296_1_0_6"/>
<dbReference type="OrthoDB" id="9808289at2"/>
<dbReference type="Proteomes" id="UP000000238">
    <property type="component" value="Chromosome"/>
</dbReference>
<dbReference type="GO" id="GO:0005886">
    <property type="term" value="C:plasma membrane"/>
    <property type="evidence" value="ECO:0007669"/>
    <property type="project" value="UniProtKB-SubCell"/>
</dbReference>
<dbReference type="GO" id="GO:0050380">
    <property type="term" value="F:undecaprenyl-diphosphatase activity"/>
    <property type="evidence" value="ECO:0007669"/>
    <property type="project" value="UniProtKB-UniRule"/>
</dbReference>
<dbReference type="GO" id="GO:0071555">
    <property type="term" value="P:cell wall organization"/>
    <property type="evidence" value="ECO:0007669"/>
    <property type="project" value="UniProtKB-KW"/>
</dbReference>
<dbReference type="GO" id="GO:0009252">
    <property type="term" value="P:peptidoglycan biosynthetic process"/>
    <property type="evidence" value="ECO:0007669"/>
    <property type="project" value="UniProtKB-KW"/>
</dbReference>
<dbReference type="GO" id="GO:0008360">
    <property type="term" value="P:regulation of cell shape"/>
    <property type="evidence" value="ECO:0007669"/>
    <property type="project" value="UniProtKB-KW"/>
</dbReference>
<dbReference type="GO" id="GO:0046677">
    <property type="term" value="P:response to antibiotic"/>
    <property type="evidence" value="ECO:0007669"/>
    <property type="project" value="UniProtKB-UniRule"/>
</dbReference>
<dbReference type="HAMAP" id="MF_01006">
    <property type="entry name" value="Undec_diphosphatase"/>
    <property type="match status" value="1"/>
</dbReference>
<dbReference type="InterPro" id="IPR003824">
    <property type="entry name" value="UppP"/>
</dbReference>
<dbReference type="NCBIfam" id="NF001393">
    <property type="entry name" value="PRK00281.2-4"/>
    <property type="match status" value="1"/>
</dbReference>
<dbReference type="NCBIfam" id="TIGR00753">
    <property type="entry name" value="undec_PP_bacA"/>
    <property type="match status" value="1"/>
</dbReference>
<dbReference type="PANTHER" id="PTHR30622">
    <property type="entry name" value="UNDECAPRENYL-DIPHOSPHATASE"/>
    <property type="match status" value="1"/>
</dbReference>
<dbReference type="PANTHER" id="PTHR30622:SF4">
    <property type="entry name" value="UNDECAPRENYL-DIPHOSPHATASE"/>
    <property type="match status" value="1"/>
</dbReference>
<dbReference type="Pfam" id="PF02673">
    <property type="entry name" value="BacA"/>
    <property type="match status" value="1"/>
</dbReference>
<feature type="chain" id="PRO_0000250238" description="Undecaprenyl-diphosphatase">
    <location>
        <begin position="1"/>
        <end position="266"/>
    </location>
</feature>
<feature type="transmembrane region" description="Helical" evidence="1">
    <location>
        <begin position="1"/>
        <end position="21"/>
    </location>
</feature>
<feature type="transmembrane region" description="Helical" evidence="1">
    <location>
        <begin position="39"/>
        <end position="59"/>
    </location>
</feature>
<feature type="transmembrane region" description="Helical" evidence="1">
    <location>
        <begin position="87"/>
        <end position="107"/>
    </location>
</feature>
<feature type="transmembrane region" description="Helical" evidence="1">
    <location>
        <begin position="111"/>
        <end position="131"/>
    </location>
</feature>
<feature type="transmembrane region" description="Helical" evidence="1">
    <location>
        <begin position="143"/>
        <end position="163"/>
    </location>
</feature>
<feature type="transmembrane region" description="Helical" evidence="1">
    <location>
        <begin position="186"/>
        <end position="206"/>
    </location>
</feature>
<feature type="transmembrane region" description="Helical" evidence="1">
    <location>
        <begin position="217"/>
        <end position="237"/>
    </location>
</feature>
<feature type="transmembrane region" description="Helical" evidence="1">
    <location>
        <begin position="243"/>
        <end position="263"/>
    </location>
</feature>
<gene>
    <name evidence="1" type="primary">uppP</name>
    <name type="ordered locus">HCH_01816</name>
</gene>
<organism>
    <name type="scientific">Hahella chejuensis (strain KCTC 2396)</name>
    <dbReference type="NCBI Taxonomy" id="349521"/>
    <lineage>
        <taxon>Bacteria</taxon>
        <taxon>Pseudomonadati</taxon>
        <taxon>Pseudomonadota</taxon>
        <taxon>Gammaproteobacteria</taxon>
        <taxon>Oceanospirillales</taxon>
        <taxon>Hahellaceae</taxon>
        <taxon>Hahella</taxon>
    </lineage>
</organism>
<protein>
    <recommendedName>
        <fullName evidence="1">Undecaprenyl-diphosphatase</fullName>
        <ecNumber evidence="1">3.6.1.27</ecNumber>
    </recommendedName>
    <alternativeName>
        <fullName evidence="1">Bacitracin resistance protein</fullName>
    </alternativeName>
    <alternativeName>
        <fullName evidence="1">Undecaprenyl pyrophosphate phosphatase</fullName>
    </alternativeName>
</protein>
<reference key="1">
    <citation type="journal article" date="2005" name="Nucleic Acids Res.">
        <title>Genomic blueprint of Hahella chejuensis, a marine microbe producing an algicidal agent.</title>
        <authorList>
            <person name="Jeong H."/>
            <person name="Yim J.H."/>
            <person name="Lee C."/>
            <person name="Choi S.-H."/>
            <person name="Park Y.K."/>
            <person name="Yoon S.H."/>
            <person name="Hur C.-G."/>
            <person name="Kang H.-Y."/>
            <person name="Kim D."/>
            <person name="Lee H.H."/>
            <person name="Park K.H."/>
            <person name="Park S.-H."/>
            <person name="Park H.-S."/>
            <person name="Lee H.K."/>
            <person name="Oh T.K."/>
            <person name="Kim J.F."/>
        </authorList>
    </citation>
    <scope>NUCLEOTIDE SEQUENCE [LARGE SCALE GENOMIC DNA]</scope>
    <source>
        <strain>KCTC 2396</strain>
    </source>
</reference>
<comment type="function">
    <text evidence="1">Catalyzes the dephosphorylation of undecaprenyl diphosphate (UPP). Confers resistance to bacitracin.</text>
</comment>
<comment type="catalytic activity">
    <reaction evidence="1">
        <text>di-trans,octa-cis-undecaprenyl diphosphate + H2O = di-trans,octa-cis-undecaprenyl phosphate + phosphate + H(+)</text>
        <dbReference type="Rhea" id="RHEA:28094"/>
        <dbReference type="ChEBI" id="CHEBI:15377"/>
        <dbReference type="ChEBI" id="CHEBI:15378"/>
        <dbReference type="ChEBI" id="CHEBI:43474"/>
        <dbReference type="ChEBI" id="CHEBI:58405"/>
        <dbReference type="ChEBI" id="CHEBI:60392"/>
        <dbReference type="EC" id="3.6.1.27"/>
    </reaction>
</comment>
<comment type="subcellular location">
    <subcellularLocation>
        <location evidence="1">Cell inner membrane</location>
        <topology evidence="1">Multi-pass membrane protein</topology>
    </subcellularLocation>
</comment>
<comment type="miscellaneous">
    <text>Bacitracin is thought to be involved in the inhibition of peptidoglycan synthesis by sequestering undecaprenyl diphosphate, thereby reducing the pool of lipid carrier available.</text>
</comment>
<comment type="similarity">
    <text evidence="1">Belongs to the UppP family.</text>
</comment>
<keyword id="KW-0046">Antibiotic resistance</keyword>
<keyword id="KW-0997">Cell inner membrane</keyword>
<keyword id="KW-1003">Cell membrane</keyword>
<keyword id="KW-0133">Cell shape</keyword>
<keyword id="KW-0961">Cell wall biogenesis/degradation</keyword>
<keyword id="KW-0378">Hydrolase</keyword>
<keyword id="KW-0472">Membrane</keyword>
<keyword id="KW-0573">Peptidoglycan synthesis</keyword>
<keyword id="KW-1185">Reference proteome</keyword>
<keyword id="KW-0812">Transmembrane</keyword>
<keyword id="KW-1133">Transmembrane helix</keyword>